<gene>
    <name evidence="1" type="primary">thiC</name>
    <name type="ordered locus">ELI_09800</name>
</gene>
<dbReference type="EC" id="4.1.99.17" evidence="1"/>
<dbReference type="EMBL" id="CP000157">
    <property type="protein sequence ID" value="ABC64052.1"/>
    <property type="molecule type" value="Genomic_DNA"/>
</dbReference>
<dbReference type="RefSeq" id="WP_011414880.1">
    <property type="nucleotide sequence ID" value="NC_007722.1"/>
</dbReference>
<dbReference type="SMR" id="Q2N8D9"/>
<dbReference type="STRING" id="314225.ELI_09800"/>
<dbReference type="KEGG" id="eli:ELI_09800"/>
<dbReference type="eggNOG" id="COG0422">
    <property type="taxonomic scope" value="Bacteria"/>
</dbReference>
<dbReference type="HOGENOM" id="CLU_013181_2_1_5"/>
<dbReference type="OrthoDB" id="9805897at2"/>
<dbReference type="UniPathway" id="UPA00060"/>
<dbReference type="Proteomes" id="UP000008808">
    <property type="component" value="Chromosome"/>
</dbReference>
<dbReference type="GO" id="GO:0005829">
    <property type="term" value="C:cytosol"/>
    <property type="evidence" value="ECO:0007669"/>
    <property type="project" value="TreeGrafter"/>
</dbReference>
<dbReference type="GO" id="GO:0051539">
    <property type="term" value="F:4 iron, 4 sulfur cluster binding"/>
    <property type="evidence" value="ECO:0007669"/>
    <property type="project" value="UniProtKB-KW"/>
</dbReference>
<dbReference type="GO" id="GO:0016830">
    <property type="term" value="F:carbon-carbon lyase activity"/>
    <property type="evidence" value="ECO:0007669"/>
    <property type="project" value="InterPro"/>
</dbReference>
<dbReference type="GO" id="GO:0008270">
    <property type="term" value="F:zinc ion binding"/>
    <property type="evidence" value="ECO:0007669"/>
    <property type="project" value="UniProtKB-UniRule"/>
</dbReference>
<dbReference type="GO" id="GO:0009228">
    <property type="term" value="P:thiamine biosynthetic process"/>
    <property type="evidence" value="ECO:0007669"/>
    <property type="project" value="UniProtKB-KW"/>
</dbReference>
<dbReference type="GO" id="GO:0009229">
    <property type="term" value="P:thiamine diphosphate biosynthetic process"/>
    <property type="evidence" value="ECO:0007669"/>
    <property type="project" value="UniProtKB-UniRule"/>
</dbReference>
<dbReference type="FunFam" id="3.20.20.540:FF:000001">
    <property type="entry name" value="Phosphomethylpyrimidine synthase"/>
    <property type="match status" value="1"/>
</dbReference>
<dbReference type="Gene3D" id="6.10.250.620">
    <property type="match status" value="1"/>
</dbReference>
<dbReference type="Gene3D" id="3.20.20.540">
    <property type="entry name" value="Radical SAM ThiC family, central domain"/>
    <property type="match status" value="1"/>
</dbReference>
<dbReference type="HAMAP" id="MF_00089">
    <property type="entry name" value="ThiC"/>
    <property type="match status" value="1"/>
</dbReference>
<dbReference type="InterPro" id="IPR037509">
    <property type="entry name" value="ThiC"/>
</dbReference>
<dbReference type="InterPro" id="IPR025747">
    <property type="entry name" value="ThiC-associated_dom"/>
</dbReference>
<dbReference type="InterPro" id="IPR038521">
    <property type="entry name" value="ThiC/Bza_core_dom"/>
</dbReference>
<dbReference type="InterPro" id="IPR002817">
    <property type="entry name" value="ThiC/BzaA/B"/>
</dbReference>
<dbReference type="NCBIfam" id="NF006763">
    <property type="entry name" value="PRK09284.1"/>
    <property type="match status" value="1"/>
</dbReference>
<dbReference type="NCBIfam" id="NF009895">
    <property type="entry name" value="PRK13352.1"/>
    <property type="match status" value="1"/>
</dbReference>
<dbReference type="NCBIfam" id="TIGR00190">
    <property type="entry name" value="thiC"/>
    <property type="match status" value="1"/>
</dbReference>
<dbReference type="PANTHER" id="PTHR30557:SF1">
    <property type="entry name" value="PHOSPHOMETHYLPYRIMIDINE SYNTHASE, CHLOROPLASTIC"/>
    <property type="match status" value="1"/>
</dbReference>
<dbReference type="PANTHER" id="PTHR30557">
    <property type="entry name" value="THIAMINE BIOSYNTHESIS PROTEIN THIC"/>
    <property type="match status" value="1"/>
</dbReference>
<dbReference type="Pfam" id="PF13667">
    <property type="entry name" value="ThiC-associated"/>
    <property type="match status" value="1"/>
</dbReference>
<dbReference type="Pfam" id="PF01964">
    <property type="entry name" value="ThiC_Rad_SAM"/>
    <property type="match status" value="1"/>
</dbReference>
<dbReference type="SFLD" id="SFLDF00407">
    <property type="entry name" value="phosphomethylpyrimidine_syntha"/>
    <property type="match status" value="1"/>
</dbReference>
<dbReference type="SFLD" id="SFLDG01114">
    <property type="entry name" value="phosphomethylpyrimidine_syntha"/>
    <property type="match status" value="1"/>
</dbReference>
<dbReference type="SFLD" id="SFLDS00113">
    <property type="entry name" value="Radical_SAM_Phosphomethylpyrim"/>
    <property type="match status" value="1"/>
</dbReference>
<name>THIC_ERYLH</name>
<keyword id="KW-0004">4Fe-4S</keyword>
<keyword id="KW-0408">Iron</keyword>
<keyword id="KW-0411">Iron-sulfur</keyword>
<keyword id="KW-0456">Lyase</keyword>
<keyword id="KW-0479">Metal-binding</keyword>
<keyword id="KW-1185">Reference proteome</keyword>
<keyword id="KW-0949">S-adenosyl-L-methionine</keyword>
<keyword id="KW-0784">Thiamine biosynthesis</keyword>
<keyword id="KW-0862">Zinc</keyword>
<organism>
    <name type="scientific">Erythrobacter litoralis (strain HTCC2594)</name>
    <dbReference type="NCBI Taxonomy" id="314225"/>
    <lineage>
        <taxon>Bacteria</taxon>
        <taxon>Pseudomonadati</taxon>
        <taxon>Pseudomonadota</taxon>
        <taxon>Alphaproteobacteria</taxon>
        <taxon>Sphingomonadales</taxon>
        <taxon>Erythrobacteraceae</taxon>
        <taxon>Erythrobacter/Porphyrobacter group</taxon>
        <taxon>Erythrobacter</taxon>
    </lineage>
</organism>
<protein>
    <recommendedName>
        <fullName evidence="1">Phosphomethylpyrimidine synthase</fullName>
        <ecNumber evidence="1">4.1.99.17</ecNumber>
    </recommendedName>
    <alternativeName>
        <fullName evidence="1">Hydroxymethylpyrimidine phosphate synthase</fullName>
        <shortName evidence="1">HMP-P synthase</shortName>
        <shortName evidence="1">HMP-phosphate synthase</shortName>
        <shortName evidence="1">HMPP synthase</shortName>
    </alternativeName>
    <alternativeName>
        <fullName evidence="1">Thiamine biosynthesis protein ThiC</fullName>
    </alternativeName>
</protein>
<sequence>MADINSPLEIGVTTGPIRGSKKIYVGARTGSGVRVAMREIQLEGGEEPVRVYDTSGPYTDPEVSIDIQAGLPALRREWIMGRGDVEEYAARAVKPEDNGQLGPDRSGGVPAFPNVARTVLRAKPGQNVSQMHYARKGIITPEMEYVAERENVGRAKLETAPDGQAWGAEIPQEITPEFVRDEVARGRAIIPNNINHPETEPMAIGRNFLVKINANIGNSAVASDVAAEVDKMVWSIRWGADTVMDLSTGRNIHDTREWIIRNSPVPIGTVPIYQALEKVGGIAEDLTWDIFRDTLIEQAEQGVDYFTIHAGVRLPYVPMTAKRVTGIVSRGGSIMAKWCLAHHKESFLYERFDEITEIMKAYDIAYSLGDGLRPGSIADANDEAQFAELYTLGELTKRAWEQDVQVMIEGPGHVPMHKIKENMDKQLEACGEAPFYTLGPLVTDIAPGYDHITSGIGAAQIGWYGTAMLCYVTPKEHLGLPDRDDVKVGVVTYKLAAHAADLAKGHPAAKVRDDALSKARFEFRWRDQFNLSLDPDTAEQYHDQTLPAEGAKTAHFCSMCGPKFCSMKITQEVRDFAAKQNSDSYLASENIKRETSAEEAEEAREGMSDMAELYKAKGERLYLPESEAD</sequence>
<feature type="chain" id="PRO_1000004760" description="Phosphomethylpyrimidine synthase">
    <location>
        <begin position="1"/>
        <end position="629"/>
    </location>
</feature>
<feature type="region of interest" description="Disordered" evidence="2">
    <location>
        <begin position="589"/>
        <end position="610"/>
    </location>
</feature>
<feature type="binding site" evidence="1">
    <location>
        <position position="215"/>
    </location>
    <ligand>
        <name>substrate</name>
    </ligand>
</feature>
<feature type="binding site" evidence="1">
    <location>
        <position position="244"/>
    </location>
    <ligand>
        <name>substrate</name>
    </ligand>
</feature>
<feature type="binding site" evidence="1">
    <location>
        <position position="273"/>
    </location>
    <ligand>
        <name>substrate</name>
    </ligand>
</feature>
<feature type="binding site" evidence="1">
    <location>
        <position position="309"/>
    </location>
    <ligand>
        <name>substrate</name>
    </ligand>
</feature>
<feature type="binding site" evidence="1">
    <location>
        <begin position="329"/>
        <end position="331"/>
    </location>
    <ligand>
        <name>substrate</name>
    </ligand>
</feature>
<feature type="binding site" evidence="1">
    <location>
        <begin position="370"/>
        <end position="373"/>
    </location>
    <ligand>
        <name>substrate</name>
    </ligand>
</feature>
<feature type="binding site" evidence="1">
    <location>
        <position position="409"/>
    </location>
    <ligand>
        <name>substrate</name>
    </ligand>
</feature>
<feature type="binding site" evidence="1">
    <location>
        <position position="413"/>
    </location>
    <ligand>
        <name>Zn(2+)</name>
        <dbReference type="ChEBI" id="CHEBI:29105"/>
    </ligand>
</feature>
<feature type="binding site" evidence="1">
    <location>
        <position position="436"/>
    </location>
    <ligand>
        <name>substrate</name>
    </ligand>
</feature>
<feature type="binding site" evidence="1">
    <location>
        <position position="477"/>
    </location>
    <ligand>
        <name>Zn(2+)</name>
        <dbReference type="ChEBI" id="CHEBI:29105"/>
    </ligand>
</feature>
<feature type="binding site" evidence="1">
    <location>
        <position position="557"/>
    </location>
    <ligand>
        <name>[4Fe-4S] cluster</name>
        <dbReference type="ChEBI" id="CHEBI:49883"/>
        <note>4Fe-4S-S-AdoMet</note>
    </ligand>
</feature>
<feature type="binding site" evidence="1">
    <location>
        <position position="560"/>
    </location>
    <ligand>
        <name>[4Fe-4S] cluster</name>
        <dbReference type="ChEBI" id="CHEBI:49883"/>
        <note>4Fe-4S-S-AdoMet</note>
    </ligand>
</feature>
<feature type="binding site" evidence="1">
    <location>
        <position position="565"/>
    </location>
    <ligand>
        <name>[4Fe-4S] cluster</name>
        <dbReference type="ChEBI" id="CHEBI:49883"/>
        <note>4Fe-4S-S-AdoMet</note>
    </ligand>
</feature>
<evidence type="ECO:0000255" key="1">
    <source>
        <dbReference type="HAMAP-Rule" id="MF_00089"/>
    </source>
</evidence>
<evidence type="ECO:0000256" key="2">
    <source>
        <dbReference type="SAM" id="MobiDB-lite"/>
    </source>
</evidence>
<accession>Q2N8D9</accession>
<proteinExistence type="inferred from homology"/>
<comment type="function">
    <text evidence="1">Catalyzes the synthesis of the hydroxymethylpyrimidine phosphate (HMP-P) moiety of thiamine from aminoimidazole ribotide (AIR) in a radical S-adenosyl-L-methionine (SAM)-dependent reaction.</text>
</comment>
<comment type="catalytic activity">
    <reaction evidence="1">
        <text>5-amino-1-(5-phospho-beta-D-ribosyl)imidazole + S-adenosyl-L-methionine = 4-amino-2-methyl-5-(phosphooxymethyl)pyrimidine + CO + 5'-deoxyadenosine + formate + L-methionine + 3 H(+)</text>
        <dbReference type="Rhea" id="RHEA:24840"/>
        <dbReference type="ChEBI" id="CHEBI:15378"/>
        <dbReference type="ChEBI" id="CHEBI:15740"/>
        <dbReference type="ChEBI" id="CHEBI:17245"/>
        <dbReference type="ChEBI" id="CHEBI:17319"/>
        <dbReference type="ChEBI" id="CHEBI:57844"/>
        <dbReference type="ChEBI" id="CHEBI:58354"/>
        <dbReference type="ChEBI" id="CHEBI:59789"/>
        <dbReference type="ChEBI" id="CHEBI:137981"/>
        <dbReference type="EC" id="4.1.99.17"/>
    </reaction>
</comment>
<comment type="cofactor">
    <cofactor evidence="1">
        <name>[4Fe-4S] cluster</name>
        <dbReference type="ChEBI" id="CHEBI:49883"/>
    </cofactor>
    <text evidence="1">Binds 1 [4Fe-4S] cluster per subunit. The cluster is coordinated with 3 cysteines and an exchangeable S-adenosyl-L-methionine.</text>
</comment>
<comment type="pathway">
    <text evidence="1">Cofactor biosynthesis; thiamine diphosphate biosynthesis.</text>
</comment>
<comment type="subunit">
    <text evidence="1">Homodimer.</text>
</comment>
<comment type="similarity">
    <text evidence="1">Belongs to the ThiC family.</text>
</comment>
<reference key="1">
    <citation type="journal article" date="2009" name="J. Bacteriol.">
        <title>Complete genome sequence of Erythrobacter litoralis HTCC2594.</title>
        <authorList>
            <person name="Oh H.M."/>
            <person name="Giovannoni S.J."/>
            <person name="Ferriera S."/>
            <person name="Johnson J."/>
            <person name="Cho J.C."/>
        </authorList>
    </citation>
    <scope>NUCLEOTIDE SEQUENCE [LARGE SCALE GENOMIC DNA]</scope>
    <source>
        <strain>HTCC2594</strain>
    </source>
</reference>